<gene>
    <name evidence="1" type="primary">uvrB</name>
    <name type="ordered locus">LBL_0755</name>
</gene>
<reference key="1">
    <citation type="journal article" date="2006" name="Proc. Natl. Acad. Sci. U.S.A.">
        <title>Genome reduction in Leptospira borgpetersenii reflects limited transmission potential.</title>
        <authorList>
            <person name="Bulach D.M."/>
            <person name="Zuerner R.L."/>
            <person name="Wilson P."/>
            <person name="Seemann T."/>
            <person name="McGrath A."/>
            <person name="Cullen P.A."/>
            <person name="Davis J."/>
            <person name="Johnson M."/>
            <person name="Kuczek E."/>
            <person name="Alt D.P."/>
            <person name="Peterson-Burch B."/>
            <person name="Coppel R.L."/>
            <person name="Rood J.I."/>
            <person name="Davies J.K."/>
            <person name="Adler B."/>
        </authorList>
    </citation>
    <scope>NUCLEOTIDE SEQUENCE [LARGE SCALE GENOMIC DNA]</scope>
    <source>
        <strain>L550</strain>
    </source>
</reference>
<sequence length="666" mass="75950">MASIFKIHSAYKPAGDQIKAIENIADSFQKGAEKVTLVGVTGSGKTFTMAQVIQNLGLPTLVLSHNKTLAAQLFREFKEFFPENAVEYFVSYYDYYQPEAYVPSSDTFIEKDSSINEEIDKLRLRATSSLLEREDVVIVSSVSCIYGLGSPEEYTNSVVALKTGDTIERDAVIRKLLHIQYNRNDIDFSRGNFRVRGDSIEIYPAYHTDGIRIEFFGDEIDSISRINPITAQTILKLEKTYIYPAKHFITSGPKVKVAIENIKAELEAQALFFRKNDKLLEAERIISRTNYDMEMLQEMGYCNGIENYSRHLTGRKAGERPACLIDYFQGEFLLIVDESHVTIPQIGGMFAGDKARKQTLVDFGFRLPSALDNRPLNFEEFETLTPKTLYVSATPADYEMEKSSKVVEQIIRPTGLLDPIVEVRSTKNQIEDLLVEIRKRIDVGERILITTLTKKMSEDLTDYYKEIGLQVAYLHSEVETLDRVAIIRDLRKGIYDVLIGINLLREGLDIPEVSLVAILDADKEGFLRNYKSLIQTVGRAARNVNGTAILYADKITDSMAKAIDETKRRRKIQEDHNLKFGITPLTIRKEVNDIIEREEKKRTSEDLVLEDVEKKFNSKKFPNKEVLKDKLREEMMKAAKELDFERAAILRDKMLSIQINDPSTEN</sequence>
<organism>
    <name type="scientific">Leptospira borgpetersenii serovar Hardjo-bovis (strain L550)</name>
    <dbReference type="NCBI Taxonomy" id="355276"/>
    <lineage>
        <taxon>Bacteria</taxon>
        <taxon>Pseudomonadati</taxon>
        <taxon>Spirochaetota</taxon>
        <taxon>Spirochaetia</taxon>
        <taxon>Leptospirales</taxon>
        <taxon>Leptospiraceae</taxon>
        <taxon>Leptospira</taxon>
    </lineage>
</organism>
<proteinExistence type="inferred from homology"/>
<accession>Q054D2</accession>
<protein>
    <recommendedName>
        <fullName evidence="1">UvrABC system protein B</fullName>
        <shortName evidence="1">Protein UvrB</shortName>
    </recommendedName>
    <alternativeName>
        <fullName evidence="1">Excinuclease ABC subunit B</fullName>
    </alternativeName>
</protein>
<keyword id="KW-0067">ATP-binding</keyword>
<keyword id="KW-0963">Cytoplasm</keyword>
<keyword id="KW-0227">DNA damage</keyword>
<keyword id="KW-0228">DNA excision</keyword>
<keyword id="KW-0234">DNA repair</keyword>
<keyword id="KW-0267">Excision nuclease</keyword>
<keyword id="KW-0347">Helicase</keyword>
<keyword id="KW-0378">Hydrolase</keyword>
<keyword id="KW-0547">Nucleotide-binding</keyword>
<keyword id="KW-0742">SOS response</keyword>
<dbReference type="EMBL" id="CP000348">
    <property type="protein sequence ID" value="ABJ78313.1"/>
    <property type="molecule type" value="Genomic_DNA"/>
</dbReference>
<dbReference type="RefSeq" id="WP_011669628.1">
    <property type="nucleotide sequence ID" value="NC_008508.1"/>
</dbReference>
<dbReference type="SMR" id="Q054D2"/>
<dbReference type="KEGG" id="lbl:LBL_0755"/>
<dbReference type="HOGENOM" id="CLU_009621_2_1_12"/>
<dbReference type="GO" id="GO:0005737">
    <property type="term" value="C:cytoplasm"/>
    <property type="evidence" value="ECO:0007669"/>
    <property type="project" value="UniProtKB-SubCell"/>
</dbReference>
<dbReference type="GO" id="GO:0009380">
    <property type="term" value="C:excinuclease repair complex"/>
    <property type="evidence" value="ECO:0007669"/>
    <property type="project" value="InterPro"/>
</dbReference>
<dbReference type="GO" id="GO:0005524">
    <property type="term" value="F:ATP binding"/>
    <property type="evidence" value="ECO:0007669"/>
    <property type="project" value="UniProtKB-UniRule"/>
</dbReference>
<dbReference type="GO" id="GO:0016887">
    <property type="term" value="F:ATP hydrolysis activity"/>
    <property type="evidence" value="ECO:0007669"/>
    <property type="project" value="InterPro"/>
</dbReference>
<dbReference type="GO" id="GO:0003677">
    <property type="term" value="F:DNA binding"/>
    <property type="evidence" value="ECO:0007669"/>
    <property type="project" value="UniProtKB-UniRule"/>
</dbReference>
<dbReference type="GO" id="GO:0009381">
    <property type="term" value="F:excinuclease ABC activity"/>
    <property type="evidence" value="ECO:0007669"/>
    <property type="project" value="UniProtKB-UniRule"/>
</dbReference>
<dbReference type="GO" id="GO:0004386">
    <property type="term" value="F:helicase activity"/>
    <property type="evidence" value="ECO:0007669"/>
    <property type="project" value="UniProtKB-KW"/>
</dbReference>
<dbReference type="GO" id="GO:0006289">
    <property type="term" value="P:nucleotide-excision repair"/>
    <property type="evidence" value="ECO:0007669"/>
    <property type="project" value="UniProtKB-UniRule"/>
</dbReference>
<dbReference type="GO" id="GO:0009432">
    <property type="term" value="P:SOS response"/>
    <property type="evidence" value="ECO:0007669"/>
    <property type="project" value="UniProtKB-UniRule"/>
</dbReference>
<dbReference type="CDD" id="cd17916">
    <property type="entry name" value="DEXHc_UvrB"/>
    <property type="match status" value="1"/>
</dbReference>
<dbReference type="CDD" id="cd18790">
    <property type="entry name" value="SF2_C_UvrB"/>
    <property type="match status" value="1"/>
</dbReference>
<dbReference type="Gene3D" id="3.40.50.300">
    <property type="entry name" value="P-loop containing nucleotide triphosphate hydrolases"/>
    <property type="match status" value="3"/>
</dbReference>
<dbReference type="Gene3D" id="4.10.860.10">
    <property type="entry name" value="UVR domain"/>
    <property type="match status" value="1"/>
</dbReference>
<dbReference type="HAMAP" id="MF_00204">
    <property type="entry name" value="UvrB"/>
    <property type="match status" value="1"/>
</dbReference>
<dbReference type="InterPro" id="IPR006935">
    <property type="entry name" value="Helicase/UvrB_N"/>
</dbReference>
<dbReference type="InterPro" id="IPR014001">
    <property type="entry name" value="Helicase_ATP-bd"/>
</dbReference>
<dbReference type="InterPro" id="IPR001650">
    <property type="entry name" value="Helicase_C-like"/>
</dbReference>
<dbReference type="InterPro" id="IPR027417">
    <property type="entry name" value="P-loop_NTPase"/>
</dbReference>
<dbReference type="InterPro" id="IPR001943">
    <property type="entry name" value="UVR_dom"/>
</dbReference>
<dbReference type="InterPro" id="IPR036876">
    <property type="entry name" value="UVR_dom_sf"/>
</dbReference>
<dbReference type="InterPro" id="IPR004807">
    <property type="entry name" value="UvrB"/>
</dbReference>
<dbReference type="InterPro" id="IPR041471">
    <property type="entry name" value="UvrB_inter"/>
</dbReference>
<dbReference type="InterPro" id="IPR024759">
    <property type="entry name" value="UvrB_YAD/RRR_dom"/>
</dbReference>
<dbReference type="NCBIfam" id="NF003673">
    <property type="entry name" value="PRK05298.1"/>
    <property type="match status" value="1"/>
</dbReference>
<dbReference type="NCBIfam" id="TIGR00631">
    <property type="entry name" value="uvrb"/>
    <property type="match status" value="1"/>
</dbReference>
<dbReference type="PANTHER" id="PTHR24029">
    <property type="entry name" value="UVRABC SYSTEM PROTEIN B"/>
    <property type="match status" value="1"/>
</dbReference>
<dbReference type="PANTHER" id="PTHR24029:SF0">
    <property type="entry name" value="UVRABC SYSTEM PROTEIN B"/>
    <property type="match status" value="1"/>
</dbReference>
<dbReference type="Pfam" id="PF00271">
    <property type="entry name" value="Helicase_C"/>
    <property type="match status" value="1"/>
</dbReference>
<dbReference type="Pfam" id="PF04851">
    <property type="entry name" value="ResIII"/>
    <property type="match status" value="1"/>
</dbReference>
<dbReference type="Pfam" id="PF02151">
    <property type="entry name" value="UVR"/>
    <property type="match status" value="1"/>
</dbReference>
<dbReference type="Pfam" id="PF12344">
    <property type="entry name" value="UvrB"/>
    <property type="match status" value="1"/>
</dbReference>
<dbReference type="Pfam" id="PF17757">
    <property type="entry name" value="UvrB_inter"/>
    <property type="match status" value="1"/>
</dbReference>
<dbReference type="SMART" id="SM00487">
    <property type="entry name" value="DEXDc"/>
    <property type="match status" value="1"/>
</dbReference>
<dbReference type="SMART" id="SM00490">
    <property type="entry name" value="HELICc"/>
    <property type="match status" value="1"/>
</dbReference>
<dbReference type="SUPFAM" id="SSF46600">
    <property type="entry name" value="C-terminal UvrC-binding domain of UvrB"/>
    <property type="match status" value="1"/>
</dbReference>
<dbReference type="SUPFAM" id="SSF52540">
    <property type="entry name" value="P-loop containing nucleoside triphosphate hydrolases"/>
    <property type="match status" value="2"/>
</dbReference>
<dbReference type="PROSITE" id="PS51192">
    <property type="entry name" value="HELICASE_ATP_BIND_1"/>
    <property type="match status" value="1"/>
</dbReference>
<dbReference type="PROSITE" id="PS51194">
    <property type="entry name" value="HELICASE_CTER"/>
    <property type="match status" value="1"/>
</dbReference>
<dbReference type="PROSITE" id="PS50151">
    <property type="entry name" value="UVR"/>
    <property type="match status" value="1"/>
</dbReference>
<name>UVRB_LEPBL</name>
<evidence type="ECO:0000255" key="1">
    <source>
        <dbReference type="HAMAP-Rule" id="MF_00204"/>
    </source>
</evidence>
<comment type="function">
    <text evidence="1">The UvrABC repair system catalyzes the recognition and processing of DNA lesions. A damage recognition complex composed of 2 UvrA and 2 UvrB subunits scans DNA for abnormalities. Upon binding of the UvrA(2)B(2) complex to a putative damaged site, the DNA wraps around one UvrB monomer. DNA wrap is dependent on ATP binding by UvrB and probably causes local melting of the DNA helix, facilitating insertion of UvrB beta-hairpin between the DNA strands. Then UvrB probes one DNA strand for the presence of a lesion. If a lesion is found the UvrA subunits dissociate and the UvrB-DNA preincision complex is formed. This complex is subsequently bound by UvrC and the second UvrB is released. If no lesion is found, the DNA wraps around the other UvrB subunit that will check the other stand for damage.</text>
</comment>
<comment type="subunit">
    <text evidence="1">Forms a heterotetramer with UvrA during the search for lesions. Interacts with UvrC in an incision complex.</text>
</comment>
<comment type="subcellular location">
    <subcellularLocation>
        <location evidence="1">Cytoplasm</location>
    </subcellularLocation>
</comment>
<comment type="domain">
    <text evidence="1">The beta-hairpin motif is involved in DNA binding.</text>
</comment>
<comment type="similarity">
    <text evidence="1">Belongs to the UvrB family.</text>
</comment>
<feature type="chain" id="PRO_1000077903" description="UvrABC system protein B">
    <location>
        <begin position="1"/>
        <end position="666"/>
    </location>
</feature>
<feature type="domain" description="Helicase ATP-binding" evidence="1">
    <location>
        <begin position="26"/>
        <end position="183"/>
    </location>
</feature>
<feature type="domain" description="Helicase C-terminal" evidence="1">
    <location>
        <begin position="429"/>
        <end position="591"/>
    </location>
</feature>
<feature type="domain" description="UVR" evidence="1">
    <location>
        <begin position="625"/>
        <end position="660"/>
    </location>
</feature>
<feature type="short sequence motif" description="Beta-hairpin">
    <location>
        <begin position="92"/>
        <end position="115"/>
    </location>
</feature>
<feature type="binding site" evidence="1">
    <location>
        <begin position="39"/>
        <end position="46"/>
    </location>
    <ligand>
        <name>ATP</name>
        <dbReference type="ChEBI" id="CHEBI:30616"/>
    </ligand>
</feature>